<reference key="1">
    <citation type="journal article" date="2005" name="Nucleic Acids Res.">
        <title>Genomic blueprint of Hahella chejuensis, a marine microbe producing an algicidal agent.</title>
        <authorList>
            <person name="Jeong H."/>
            <person name="Yim J.H."/>
            <person name="Lee C."/>
            <person name="Choi S.-H."/>
            <person name="Park Y.K."/>
            <person name="Yoon S.H."/>
            <person name="Hur C.-G."/>
            <person name="Kang H.-Y."/>
            <person name="Kim D."/>
            <person name="Lee H.H."/>
            <person name="Park K.H."/>
            <person name="Park S.-H."/>
            <person name="Park H.-S."/>
            <person name="Lee H.K."/>
            <person name="Oh T.K."/>
            <person name="Kim J.F."/>
        </authorList>
    </citation>
    <scope>NUCLEOTIDE SEQUENCE [LARGE SCALE GENOMIC DNA]</scope>
    <source>
        <strain>KCTC 2396</strain>
    </source>
</reference>
<comment type="function">
    <text evidence="1">Binds to DNA and alters its conformation. May be involved in regulation of gene expression, nucleoid organization and DNA protection.</text>
</comment>
<comment type="subunit">
    <text evidence="1">Homodimer.</text>
</comment>
<comment type="subcellular location">
    <subcellularLocation>
        <location evidence="1">Cytoplasm</location>
        <location evidence="1">Nucleoid</location>
    </subcellularLocation>
</comment>
<comment type="similarity">
    <text evidence="1">Belongs to the YbaB/EbfC family.</text>
</comment>
<feature type="chain" id="PRO_1000003750" description="Nucleoid-associated protein HCH_02614">
    <location>
        <begin position="1"/>
        <end position="108"/>
    </location>
</feature>
<organism>
    <name type="scientific">Hahella chejuensis (strain KCTC 2396)</name>
    <dbReference type="NCBI Taxonomy" id="349521"/>
    <lineage>
        <taxon>Bacteria</taxon>
        <taxon>Pseudomonadati</taxon>
        <taxon>Pseudomonadota</taxon>
        <taxon>Gammaproteobacteria</taxon>
        <taxon>Oceanospirillales</taxon>
        <taxon>Hahellaceae</taxon>
        <taxon>Hahella</taxon>
    </lineage>
</organism>
<name>Y2614_HAHCH</name>
<dbReference type="EMBL" id="CP000155">
    <property type="protein sequence ID" value="ABC29404.1"/>
    <property type="molecule type" value="Genomic_DNA"/>
</dbReference>
<dbReference type="RefSeq" id="WP_011396473.1">
    <property type="nucleotide sequence ID" value="NC_007645.1"/>
</dbReference>
<dbReference type="SMR" id="Q2SIX0"/>
<dbReference type="STRING" id="349521.HCH_02614"/>
<dbReference type="KEGG" id="hch:HCH_02614"/>
<dbReference type="eggNOG" id="COG0718">
    <property type="taxonomic scope" value="Bacteria"/>
</dbReference>
<dbReference type="HOGENOM" id="CLU_140930_0_0_6"/>
<dbReference type="Proteomes" id="UP000000238">
    <property type="component" value="Chromosome"/>
</dbReference>
<dbReference type="GO" id="GO:0043590">
    <property type="term" value="C:bacterial nucleoid"/>
    <property type="evidence" value="ECO:0007669"/>
    <property type="project" value="UniProtKB-UniRule"/>
</dbReference>
<dbReference type="GO" id="GO:0005829">
    <property type="term" value="C:cytosol"/>
    <property type="evidence" value="ECO:0007669"/>
    <property type="project" value="TreeGrafter"/>
</dbReference>
<dbReference type="GO" id="GO:0003677">
    <property type="term" value="F:DNA binding"/>
    <property type="evidence" value="ECO:0007669"/>
    <property type="project" value="UniProtKB-UniRule"/>
</dbReference>
<dbReference type="FunFam" id="3.30.1310.10:FF:000001">
    <property type="entry name" value="Nucleoid-associated protein YbaB"/>
    <property type="match status" value="1"/>
</dbReference>
<dbReference type="Gene3D" id="3.30.1310.10">
    <property type="entry name" value="Nucleoid-associated protein YbaB-like domain"/>
    <property type="match status" value="1"/>
</dbReference>
<dbReference type="HAMAP" id="MF_00274">
    <property type="entry name" value="DNA_YbaB_EbfC"/>
    <property type="match status" value="1"/>
</dbReference>
<dbReference type="InterPro" id="IPR036894">
    <property type="entry name" value="YbaB-like_sf"/>
</dbReference>
<dbReference type="InterPro" id="IPR004401">
    <property type="entry name" value="YbaB/EbfC"/>
</dbReference>
<dbReference type="NCBIfam" id="TIGR00103">
    <property type="entry name" value="DNA_YbaB_EbfC"/>
    <property type="match status" value="1"/>
</dbReference>
<dbReference type="PANTHER" id="PTHR33449">
    <property type="entry name" value="NUCLEOID-ASSOCIATED PROTEIN YBAB"/>
    <property type="match status" value="1"/>
</dbReference>
<dbReference type="PANTHER" id="PTHR33449:SF1">
    <property type="entry name" value="NUCLEOID-ASSOCIATED PROTEIN YBAB"/>
    <property type="match status" value="1"/>
</dbReference>
<dbReference type="Pfam" id="PF02575">
    <property type="entry name" value="YbaB_DNA_bd"/>
    <property type="match status" value="1"/>
</dbReference>
<dbReference type="PIRSF" id="PIRSF004555">
    <property type="entry name" value="UCP004555"/>
    <property type="match status" value="1"/>
</dbReference>
<dbReference type="SUPFAM" id="SSF82607">
    <property type="entry name" value="YbaB-like"/>
    <property type="match status" value="1"/>
</dbReference>
<protein>
    <recommendedName>
        <fullName evidence="1">Nucleoid-associated protein HCH_02614</fullName>
    </recommendedName>
</protein>
<gene>
    <name type="ordered locus">HCH_02614</name>
</gene>
<keyword id="KW-0963">Cytoplasm</keyword>
<keyword id="KW-0238">DNA-binding</keyword>
<keyword id="KW-1185">Reference proteome</keyword>
<evidence type="ECO:0000255" key="1">
    <source>
        <dbReference type="HAMAP-Rule" id="MF_00274"/>
    </source>
</evidence>
<accession>Q2SIX0</accession>
<proteinExistence type="inferred from homology"/>
<sequence>MIKGNMGDLMKQAQKIQEQMQKAQEELANAEVSGESGGGLIKIVMNGRHDVKKVEIDASLMQEEKEILEDLLAAAVNDAVRKVEKNNQDKMSNMTAGLGIPPNFKMPF</sequence>